<protein>
    <recommendedName>
        <fullName>Fruiting body protein SC14</fullName>
    </recommendedName>
</protein>
<keyword id="KW-0293">Fruiting body</keyword>
<keyword id="KW-0325">Glycoprotein</keyword>
<keyword id="KW-0964">Secreted</keyword>
<keyword id="KW-0732">Signal</keyword>
<organism>
    <name type="scientific">Schizophyllum commune</name>
    <name type="common">Split gill fungus</name>
    <dbReference type="NCBI Taxonomy" id="5334"/>
    <lineage>
        <taxon>Eukaryota</taxon>
        <taxon>Fungi</taxon>
        <taxon>Dikarya</taxon>
        <taxon>Basidiomycota</taxon>
        <taxon>Agaricomycotina</taxon>
        <taxon>Agaricomycetes</taxon>
        <taxon>Agaricomycetidae</taxon>
        <taxon>Agaricales</taxon>
        <taxon>Schizophyllaceae</taxon>
        <taxon>Schizophyllum</taxon>
    </lineage>
</organism>
<feature type="signal peptide" evidence="1">
    <location>
        <begin position="1"/>
        <end position="18"/>
    </location>
</feature>
<feature type="chain" id="PRO_0000006316" description="Fruiting body protein SC14">
    <location>
        <begin position="19"/>
        <end position="214"/>
    </location>
</feature>
<feature type="domain" description="SCP">
    <location>
        <begin position="72"/>
        <end position="195"/>
    </location>
</feature>
<feature type="glycosylation site" description="N-linked (GlcNAc...) asparagine" evidence="1">
    <location>
        <position position="61"/>
    </location>
</feature>
<feature type="glycosylation site" description="N-linked (GlcNAc...) asparagine" evidence="1">
    <location>
        <position position="144"/>
    </location>
</feature>
<comment type="subcellular location">
    <subcellularLocation>
        <location>Secreted</location>
    </subcellularLocation>
    <text>Associated with the fruiting bodies.</text>
</comment>
<comment type="developmental stage">
    <text>Expressed only in fruiting dikaryons.</text>
</comment>
<comment type="similarity">
    <text evidence="2">Belongs to the CRISP family.</text>
</comment>
<sequence length="214" mass="23661">MKLNIAILLAALAATASASPAGDISEVAVDADASELLVDPRAELPVAPRASFFIDARQDTNGTSQDEIDQWLTAHNDERAQHGPVPLVWNQDLQNAAMSWASRCVYKHNRGGQNIAARYNTRANFPREIDRAVGQWNNERGEYNATTFKGAGHWTQVVWKHSRNLGCAAYSCPQGTLGKKPGDKWKSLWYYVCNYDPKGNVVPASKYYPSNVQP</sequence>
<reference key="1">
    <citation type="journal article" date="1993" name="J. Gen. Microbiol.">
        <title>The Sc7/Sc14 gene family of Schizophyllum commune codes for extracellular proteins specifically expressed during fruit-body formation.</title>
        <authorList>
            <person name="Schuren F.H.J."/>
            <person name="Asgeirsdottir S.A."/>
            <person name="Kothe E.M."/>
            <person name="Scheer J.M.J."/>
            <person name="Wessels J.G.H."/>
        </authorList>
    </citation>
    <scope>NUCLEOTIDE SEQUENCE [MRNA]</scope>
</reference>
<accession>P35795</accession>
<evidence type="ECO:0000255" key="1"/>
<evidence type="ECO:0000305" key="2"/>
<proteinExistence type="evidence at transcript level"/>
<name>SC14_SCHCO</name>
<dbReference type="EMBL" id="M81723">
    <property type="protein sequence ID" value="AAA16208.1"/>
    <property type="molecule type" value="mRNA"/>
</dbReference>
<dbReference type="PIR" id="S27449">
    <property type="entry name" value="S27449"/>
</dbReference>
<dbReference type="SMR" id="P35795"/>
<dbReference type="GlyCosmos" id="P35795">
    <property type="glycosylation" value="2 sites, No reported glycans"/>
</dbReference>
<dbReference type="VEuPathDB" id="FungiDB:SCHCODRAFT_02627934"/>
<dbReference type="GO" id="GO:0005576">
    <property type="term" value="C:extracellular region"/>
    <property type="evidence" value="ECO:0007669"/>
    <property type="project" value="UniProtKB-SubCell"/>
</dbReference>
<dbReference type="Gene3D" id="3.40.33.10">
    <property type="entry name" value="CAP"/>
    <property type="match status" value="1"/>
</dbReference>
<dbReference type="InterPro" id="IPR018244">
    <property type="entry name" value="Allrgn_V5/Tpx1_CS"/>
</dbReference>
<dbReference type="InterPro" id="IPR014044">
    <property type="entry name" value="CAP_dom"/>
</dbReference>
<dbReference type="InterPro" id="IPR035940">
    <property type="entry name" value="CAP_sf"/>
</dbReference>
<dbReference type="InterPro" id="IPR001283">
    <property type="entry name" value="CRISP-related"/>
</dbReference>
<dbReference type="PANTHER" id="PTHR10334">
    <property type="entry name" value="CYSTEINE-RICH SECRETORY PROTEIN-RELATED"/>
    <property type="match status" value="1"/>
</dbReference>
<dbReference type="Pfam" id="PF00188">
    <property type="entry name" value="CAP"/>
    <property type="match status" value="1"/>
</dbReference>
<dbReference type="PRINTS" id="PR00837">
    <property type="entry name" value="V5TPXLIKE"/>
</dbReference>
<dbReference type="SMART" id="SM00198">
    <property type="entry name" value="SCP"/>
    <property type="match status" value="1"/>
</dbReference>
<dbReference type="SUPFAM" id="SSF55797">
    <property type="entry name" value="PR-1-like"/>
    <property type="match status" value="1"/>
</dbReference>
<dbReference type="PROSITE" id="PS01009">
    <property type="entry name" value="CRISP_1"/>
    <property type="match status" value="1"/>
</dbReference>
<dbReference type="PROSITE" id="PS01010">
    <property type="entry name" value="CRISP_2"/>
    <property type="match status" value="1"/>
</dbReference>
<gene>
    <name type="primary">SC14</name>
</gene>